<comment type="function">
    <text evidence="6">Aerial growth, conidiation, and dispersal of filamentous fungi in the environment rely upon a capability of their secreting small amphipathic proteins called hydrophobins (HPBs) with low sequence identity. Class I can self-assemble into an outermost layer of rodlet bundles on aerial cell surfaces, conferring cellular hydrophobicity that supports fungal growth, development and dispersal; whereas Class II form highly ordered films at water-air interfaces through intermolecular interactions but contribute nothing to the rodlet structure.</text>
</comment>
<comment type="subunit">
    <text evidence="1">Self-assembles to form functional amyloid fibrils called rodlets. Self-assembly into fibrillar rodlets occurs spontaneously at hydrophobic:hydrophilic interfaces and the rodlets further associate laterally to form amphipathic monolayers.</text>
</comment>
<comment type="subcellular location">
    <subcellularLocation>
        <location>Secreted</location>
    </subcellularLocation>
    <subcellularLocation>
        <location>Secreted</location>
        <location>Cell wall</location>
    </subcellularLocation>
</comment>
<comment type="induction">
    <text evidence="4">Expression is light-dependent and positiveley regulated by the GATA transcription factor nsdD2 that binds promoter regulatory sequences containing a GATC motif.</text>
</comment>
<comment type="similarity">
    <text evidence="6">Belongs to the fungal hydrophobin family.</text>
</comment>
<reference key="1">
    <citation type="journal article" date="2010" name="Proc. Natl. Acad. Sci. U.S.A.">
        <title>Insights into evolution of multicellular fungi from the assembled chromosomes of the mushroom Coprinopsis cinerea (Coprinus cinereus).</title>
        <authorList>
            <person name="Stajich J.E."/>
            <person name="Wilke S.K."/>
            <person name="Ahren D."/>
            <person name="Au C.H."/>
            <person name="Birren B.W."/>
            <person name="Borodovsky M."/>
            <person name="Burns C."/>
            <person name="Canbaeck B."/>
            <person name="Casselton L.A."/>
            <person name="Cheng C.K."/>
            <person name="Deng J."/>
            <person name="Dietrich F.S."/>
            <person name="Fargo D.C."/>
            <person name="Farman M.L."/>
            <person name="Gathman A.C."/>
            <person name="Goldberg J."/>
            <person name="Guigo R."/>
            <person name="Hoegger P.J."/>
            <person name="Hooker J.B."/>
            <person name="Huggins A."/>
            <person name="James T.Y."/>
            <person name="Kamada T."/>
            <person name="Kilaru S."/>
            <person name="Kodira C."/>
            <person name="Kuees U."/>
            <person name="Kupfer D."/>
            <person name="Kwan H.S."/>
            <person name="Lomsadze A."/>
            <person name="Li W."/>
            <person name="Lilly W.W."/>
            <person name="Ma L.-J."/>
            <person name="Mackey A.J."/>
            <person name="Manning G."/>
            <person name="Martin F."/>
            <person name="Muraguchi H."/>
            <person name="Natvig D.O."/>
            <person name="Palmerini H."/>
            <person name="Ramesh M.A."/>
            <person name="Rehmeyer C.J."/>
            <person name="Roe B.A."/>
            <person name="Shenoy N."/>
            <person name="Stanke M."/>
            <person name="Ter-Hovhannisyan V."/>
            <person name="Tunlid A."/>
            <person name="Velagapudi R."/>
            <person name="Vision T.J."/>
            <person name="Zeng Q."/>
            <person name="Zolan M.E."/>
            <person name="Pukkila P.J."/>
        </authorList>
    </citation>
    <scope>NUCLEOTIDE SEQUENCE [LARGE SCALE GENOMIC DNA]</scope>
    <scope>IDENTIFICATION</scope>
    <source>
        <strain>Okayama-7 / 130 / ATCC MYA-4618 / FGSC 9003</strain>
    </source>
</reference>
<reference key="2">
    <citation type="journal article" date="2021" name="MBio">
        <title>Molecular Mechanism by Which the GATA Transcription Factor CcNsdD2 Regulates the Developmental Fate of Coprinopsis cinerea under Dark or Light Conditions.</title>
        <authorList>
            <person name="Liu C."/>
            <person name="Kang L."/>
            <person name="Lin M."/>
            <person name="Bi J."/>
            <person name="Liu Z."/>
            <person name="Yuan S."/>
        </authorList>
    </citation>
    <scope>INDUCTION</scope>
</reference>
<gene>
    <name evidence="5" type="primary">hyd2</name>
    <name type="ORF">CC1G_06086</name>
</gene>
<keyword id="KW-0134">Cell wall</keyword>
<keyword id="KW-1015">Disulfide bond</keyword>
<keyword id="KW-0325">Glycoprotein</keyword>
<keyword id="KW-1185">Reference proteome</keyword>
<keyword id="KW-0964">Secreted</keyword>
<keyword id="KW-0732">Signal</keyword>
<dbReference type="EMBL" id="AACS02000002">
    <property type="protein sequence ID" value="EAU81875.2"/>
    <property type="molecule type" value="Genomic_DNA"/>
</dbReference>
<dbReference type="RefSeq" id="XP_001839896.2">
    <property type="nucleotide sequence ID" value="XM_001839844.2"/>
</dbReference>
<dbReference type="STRING" id="240176.A8PA37"/>
<dbReference type="GeneID" id="6016519"/>
<dbReference type="KEGG" id="cci:CC1G_06086"/>
<dbReference type="VEuPathDB" id="FungiDB:CC1G_06086"/>
<dbReference type="HOGENOM" id="CLU_105134_2_0_1"/>
<dbReference type="InParanoid" id="A8PA37"/>
<dbReference type="OMA" id="PWNTTPP"/>
<dbReference type="OrthoDB" id="4225815at2759"/>
<dbReference type="Proteomes" id="UP000001861">
    <property type="component" value="Unassembled WGS sequence"/>
</dbReference>
<dbReference type="GO" id="GO:0005576">
    <property type="term" value="C:extracellular region"/>
    <property type="evidence" value="ECO:0007669"/>
    <property type="project" value="UniProtKB-KW"/>
</dbReference>
<dbReference type="GO" id="GO:0009277">
    <property type="term" value="C:fungal-type cell wall"/>
    <property type="evidence" value="ECO:0007669"/>
    <property type="project" value="InterPro"/>
</dbReference>
<dbReference type="GO" id="GO:0005199">
    <property type="term" value="F:structural constituent of cell wall"/>
    <property type="evidence" value="ECO:0007669"/>
    <property type="project" value="InterPro"/>
</dbReference>
<dbReference type="CDD" id="cd23507">
    <property type="entry name" value="hydrophobin_I"/>
    <property type="match status" value="1"/>
</dbReference>
<dbReference type="InterPro" id="IPR001338">
    <property type="entry name" value="Hydrophobin"/>
</dbReference>
<dbReference type="Pfam" id="PF01185">
    <property type="entry name" value="Hydrophobin"/>
    <property type="match status" value="1"/>
</dbReference>
<dbReference type="SMART" id="SM00075">
    <property type="entry name" value="HYDRO"/>
    <property type="match status" value="1"/>
</dbReference>
<name>HYD2_COPC7</name>
<protein>
    <recommendedName>
        <fullName evidence="5">Class I hydrophobin 2</fullName>
    </recommendedName>
</protein>
<organism>
    <name type="scientific">Coprinopsis cinerea (strain Okayama-7 / 130 / ATCC MYA-4618 / FGSC 9003)</name>
    <name type="common">Inky cap fungus</name>
    <name type="synonym">Hormographiella aspergillata</name>
    <dbReference type="NCBI Taxonomy" id="240176"/>
    <lineage>
        <taxon>Eukaryota</taxon>
        <taxon>Fungi</taxon>
        <taxon>Dikarya</taxon>
        <taxon>Basidiomycota</taxon>
        <taxon>Agaricomycotina</taxon>
        <taxon>Agaricomycetes</taxon>
        <taxon>Agaricomycetidae</taxon>
        <taxon>Agaricales</taxon>
        <taxon>Agaricineae</taxon>
        <taxon>Psathyrellaceae</taxon>
        <taxon>Coprinopsis</taxon>
    </lineage>
</organism>
<feature type="signal peptide" evidence="2">
    <location>
        <begin position="1"/>
        <end position="20"/>
    </location>
</feature>
<feature type="chain" id="PRO_5013985940" description="Class I hydrophobin 2">
    <location>
        <begin position="21"/>
        <end position="135"/>
    </location>
</feature>
<feature type="glycosylation site" description="N-linked (GlcNAc...) asparagine" evidence="3">
    <location>
        <position position="117"/>
    </location>
</feature>
<feature type="glycosylation site" description="N-linked (GlcNAc...) asparagine" evidence="3">
    <location>
        <position position="132"/>
    </location>
</feature>
<feature type="disulfide bond" evidence="1">
    <location>
        <begin position="29"/>
        <end position="114"/>
    </location>
</feature>
<feature type="disulfide bond" evidence="1">
    <location>
        <begin position="36"/>
        <end position="107"/>
    </location>
</feature>
<feature type="disulfide bond" evidence="1">
    <location>
        <begin position="37"/>
        <end position="73"/>
    </location>
</feature>
<feature type="disulfide bond" evidence="1">
    <location>
        <begin position="115"/>
        <end position="128"/>
    </location>
</feature>
<proteinExistence type="evidence at transcript level"/>
<sequence>MFARLTSTLFALAAVSAVFAAPGATTEQCNGGEVQCCNSVQDANNLDSSVKKIITGLLHLDLKQITGQVGVTCTSVNVLGIGGGSSWYGFAFSYSYILASDWAIGVCSTQQKVCCTNNSFHGLIALGCTPINVSV</sequence>
<evidence type="ECO:0000250" key="1">
    <source>
        <dbReference type="UniProtKB" id="Q04571"/>
    </source>
</evidence>
<evidence type="ECO:0000255" key="2"/>
<evidence type="ECO:0000255" key="3">
    <source>
        <dbReference type="PROSITE-ProRule" id="PRU00498"/>
    </source>
</evidence>
<evidence type="ECO:0000269" key="4">
    <source>
    </source>
</evidence>
<evidence type="ECO:0000303" key="5">
    <source>
    </source>
</evidence>
<evidence type="ECO:0000305" key="6"/>
<accession>A8PA37</accession>